<feature type="chain" id="PRO_0000217933" description="Photosystem II reaction center protein T">
    <location>
        <begin position="1"/>
        <end position="35"/>
    </location>
</feature>
<feature type="transmembrane region" description="Helical" evidence="1">
    <location>
        <begin position="3"/>
        <end position="23"/>
    </location>
</feature>
<protein>
    <recommendedName>
        <fullName evidence="1">Photosystem II reaction center protein T</fullName>
        <shortName evidence="1">PSII-T</shortName>
    </recommendedName>
</protein>
<dbReference type="EMBL" id="AF123852">
    <property type="protein sequence ID" value="AAG26286.1"/>
    <property type="molecule type" value="Genomic_DNA"/>
</dbReference>
<dbReference type="RefSeq" id="YP_009117869.1">
    <property type="nucleotide sequence ID" value="NC_026301.1"/>
</dbReference>
<dbReference type="SMR" id="Q9GF83"/>
<dbReference type="GeneID" id="22975688"/>
<dbReference type="GO" id="GO:0009535">
    <property type="term" value="C:chloroplast thylakoid membrane"/>
    <property type="evidence" value="ECO:0007669"/>
    <property type="project" value="UniProtKB-SubCell"/>
</dbReference>
<dbReference type="GO" id="GO:0009539">
    <property type="term" value="C:photosystem II reaction center"/>
    <property type="evidence" value="ECO:0007669"/>
    <property type="project" value="InterPro"/>
</dbReference>
<dbReference type="GO" id="GO:0015979">
    <property type="term" value="P:photosynthesis"/>
    <property type="evidence" value="ECO:0007669"/>
    <property type="project" value="UniProtKB-UniRule"/>
</dbReference>
<dbReference type="HAMAP" id="MF_00808">
    <property type="entry name" value="PSII_PsbT"/>
    <property type="match status" value="1"/>
</dbReference>
<dbReference type="InterPro" id="IPR001743">
    <property type="entry name" value="PSII_PsbT"/>
</dbReference>
<dbReference type="InterPro" id="IPR037268">
    <property type="entry name" value="PSII_PsbT_sf"/>
</dbReference>
<dbReference type="PANTHER" id="PTHR36411">
    <property type="match status" value="1"/>
</dbReference>
<dbReference type="PANTHER" id="PTHR36411:SF2">
    <property type="entry name" value="PHOTOSYSTEM II REACTION CENTER PROTEIN T"/>
    <property type="match status" value="1"/>
</dbReference>
<dbReference type="Pfam" id="PF01405">
    <property type="entry name" value="PsbT"/>
    <property type="match status" value="1"/>
</dbReference>
<dbReference type="SUPFAM" id="SSF161029">
    <property type="entry name" value="Photosystem II reaction center protein T, PsbT"/>
    <property type="match status" value="1"/>
</dbReference>
<sequence length="35" mass="3960">MEALVYTFLLVSTLGILFFAIFFREPPRVTPKGGK</sequence>
<geneLocation type="chloroplast"/>
<name>PSBT_GNEGN</name>
<proteinExistence type="inferred from homology"/>
<keyword id="KW-0150">Chloroplast</keyword>
<keyword id="KW-0472">Membrane</keyword>
<keyword id="KW-0602">Photosynthesis</keyword>
<keyword id="KW-0604">Photosystem II</keyword>
<keyword id="KW-0934">Plastid</keyword>
<keyword id="KW-0793">Thylakoid</keyword>
<keyword id="KW-0812">Transmembrane</keyword>
<keyword id="KW-1133">Transmembrane helix</keyword>
<comment type="function">
    <text evidence="1">Found at the monomer-monomer interface of the photosystem II (PS II) dimer, plays a role in assembly and dimerization of PSII. PSII is a light-driven water plastoquinone oxidoreductase, using light energy to abstract electrons from H(2)O, generating a proton gradient subsequently used for ATP formation.</text>
</comment>
<comment type="subunit">
    <text evidence="1">PSII is composed of 1 copy each of membrane proteins PsbA, PsbB, PsbC, PsbD, PsbE, PsbF, PsbH, PsbI, PsbJ, PsbK, PsbL, PsbM, PsbT, PsbY, PsbZ, Psb30/Ycf12, at least 3 peripheral proteins of the oxygen-evolving complex and a large number of cofactors. It forms dimeric complexes.</text>
</comment>
<comment type="subcellular location">
    <subcellularLocation>
        <location evidence="1">Plastid</location>
        <location evidence="1">Chloroplast thylakoid membrane</location>
        <topology evidence="1">Single-pass membrane protein</topology>
    </subcellularLocation>
</comment>
<comment type="similarity">
    <text evidence="1">Belongs to the PsbT family.</text>
</comment>
<organism>
    <name type="scientific">Gnetum gnemon</name>
    <name type="common">Spanish joint-fir</name>
    <name type="synonym">Gnetum acutatum</name>
    <dbReference type="NCBI Taxonomy" id="3382"/>
    <lineage>
        <taxon>Eukaryota</taxon>
        <taxon>Viridiplantae</taxon>
        <taxon>Streptophyta</taxon>
        <taxon>Embryophyta</taxon>
        <taxon>Tracheophyta</taxon>
        <taxon>Spermatophyta</taxon>
        <taxon>Gnetopsida</taxon>
        <taxon>Gnetidae</taxon>
        <taxon>Gnetales</taxon>
        <taxon>Gnetaceae</taxon>
        <taxon>Gnetum</taxon>
    </lineage>
</organism>
<reference key="1">
    <citation type="journal article" date="2000" name="Am. J. Bot.">
        <title>Utility of 17 chloroplast genes for inferring the phylogeny of the basal angiosperms.</title>
        <authorList>
            <person name="Graham S.W."/>
            <person name="Olmstead R.G."/>
        </authorList>
    </citation>
    <scope>NUCLEOTIDE SEQUENCE [GENOMIC DNA]</scope>
</reference>
<accession>Q9GF83</accession>
<gene>
    <name evidence="1" type="primary">psbT</name>
</gene>
<evidence type="ECO:0000255" key="1">
    <source>
        <dbReference type="HAMAP-Rule" id="MF_00808"/>
    </source>
</evidence>